<name>YCIB_BURCJ</name>
<sequence>MKFLFDLFPIILFFVAFKVWGIFTATAVAIVATLAQVAWVAFRHRKVDTMLWVSLGVIVVFGGATLVLHDEKFIQWKPTVLYWLFAIGLLAARYAFSKNLIEKMMGKQLTLPSPVWDKLNLAWALFFAVLGVANLYVVHNFTESQWVNFKLFGTTGAMVVFIILQSLWLTKYLKDE</sequence>
<gene>
    <name evidence="1" type="primary">yciB</name>
    <name type="ordered locus">BceJ2315_19460</name>
    <name type="ORF">BCAL1983</name>
</gene>
<feature type="chain" id="PRO_1000098873" description="Inner membrane-spanning protein YciB">
    <location>
        <begin position="1"/>
        <end position="176"/>
    </location>
</feature>
<feature type="transmembrane region" description="Helical" evidence="1">
    <location>
        <begin position="3"/>
        <end position="23"/>
    </location>
</feature>
<feature type="transmembrane region" description="Helical" evidence="1">
    <location>
        <begin position="24"/>
        <end position="44"/>
    </location>
</feature>
<feature type="transmembrane region" description="Helical" evidence="1">
    <location>
        <begin position="49"/>
        <end position="69"/>
    </location>
</feature>
<feature type="transmembrane region" description="Helical" evidence="1">
    <location>
        <begin position="72"/>
        <end position="92"/>
    </location>
</feature>
<feature type="transmembrane region" description="Helical" evidence="1">
    <location>
        <begin position="121"/>
        <end position="141"/>
    </location>
</feature>
<feature type="transmembrane region" description="Helical" evidence="1">
    <location>
        <begin position="149"/>
        <end position="169"/>
    </location>
</feature>
<comment type="function">
    <text evidence="1">Plays a role in cell envelope biogenesis, maintenance of cell envelope integrity and membrane homeostasis.</text>
</comment>
<comment type="subcellular location">
    <subcellularLocation>
        <location evidence="1">Cell inner membrane</location>
        <topology evidence="1">Multi-pass membrane protein</topology>
    </subcellularLocation>
</comment>
<comment type="similarity">
    <text evidence="1">Belongs to the YciB family.</text>
</comment>
<dbReference type="EMBL" id="AM747720">
    <property type="protein sequence ID" value="CAR52283.1"/>
    <property type="molecule type" value="Genomic_DNA"/>
</dbReference>
<dbReference type="RefSeq" id="WP_006483893.1">
    <property type="nucleotide sequence ID" value="NC_011000.1"/>
</dbReference>
<dbReference type="SMR" id="B4EBL0"/>
<dbReference type="KEGG" id="bcj:BCAL1983"/>
<dbReference type="eggNOG" id="COG2917">
    <property type="taxonomic scope" value="Bacteria"/>
</dbReference>
<dbReference type="HOGENOM" id="CLU_089554_2_0_4"/>
<dbReference type="BioCyc" id="BCEN216591:G1G1V-2176-MONOMER"/>
<dbReference type="Proteomes" id="UP000001035">
    <property type="component" value="Chromosome 1"/>
</dbReference>
<dbReference type="GO" id="GO:0005886">
    <property type="term" value="C:plasma membrane"/>
    <property type="evidence" value="ECO:0007669"/>
    <property type="project" value="UniProtKB-SubCell"/>
</dbReference>
<dbReference type="HAMAP" id="MF_00189">
    <property type="entry name" value="YciB"/>
    <property type="match status" value="1"/>
</dbReference>
<dbReference type="InterPro" id="IPR006008">
    <property type="entry name" value="YciB"/>
</dbReference>
<dbReference type="NCBIfam" id="TIGR00997">
    <property type="entry name" value="ispZ"/>
    <property type="match status" value="1"/>
</dbReference>
<dbReference type="NCBIfam" id="NF001325">
    <property type="entry name" value="PRK00259.1-3"/>
    <property type="match status" value="1"/>
</dbReference>
<dbReference type="PANTHER" id="PTHR36917:SF1">
    <property type="entry name" value="INNER MEMBRANE-SPANNING PROTEIN YCIB"/>
    <property type="match status" value="1"/>
</dbReference>
<dbReference type="PANTHER" id="PTHR36917">
    <property type="entry name" value="INTRACELLULAR SEPTATION PROTEIN A-RELATED"/>
    <property type="match status" value="1"/>
</dbReference>
<dbReference type="Pfam" id="PF04279">
    <property type="entry name" value="IspA"/>
    <property type="match status" value="1"/>
</dbReference>
<protein>
    <recommendedName>
        <fullName evidence="1">Inner membrane-spanning protein YciB</fullName>
    </recommendedName>
</protein>
<evidence type="ECO:0000255" key="1">
    <source>
        <dbReference type="HAMAP-Rule" id="MF_00189"/>
    </source>
</evidence>
<keyword id="KW-0997">Cell inner membrane</keyword>
<keyword id="KW-1003">Cell membrane</keyword>
<keyword id="KW-0472">Membrane</keyword>
<keyword id="KW-0812">Transmembrane</keyword>
<keyword id="KW-1133">Transmembrane helix</keyword>
<organism>
    <name type="scientific">Burkholderia cenocepacia (strain ATCC BAA-245 / DSM 16553 / LMG 16656 / NCTC 13227 / J2315 / CF5610)</name>
    <name type="common">Burkholderia cepacia (strain J2315)</name>
    <dbReference type="NCBI Taxonomy" id="216591"/>
    <lineage>
        <taxon>Bacteria</taxon>
        <taxon>Pseudomonadati</taxon>
        <taxon>Pseudomonadota</taxon>
        <taxon>Betaproteobacteria</taxon>
        <taxon>Burkholderiales</taxon>
        <taxon>Burkholderiaceae</taxon>
        <taxon>Burkholderia</taxon>
        <taxon>Burkholderia cepacia complex</taxon>
    </lineage>
</organism>
<accession>B4EBL0</accession>
<proteinExistence type="inferred from homology"/>
<reference key="1">
    <citation type="journal article" date="2009" name="J. Bacteriol.">
        <title>The genome of Burkholderia cenocepacia J2315, an epidemic pathogen of cystic fibrosis patients.</title>
        <authorList>
            <person name="Holden M.T."/>
            <person name="Seth-Smith H.M."/>
            <person name="Crossman L.C."/>
            <person name="Sebaihia M."/>
            <person name="Bentley S.D."/>
            <person name="Cerdeno-Tarraga A.M."/>
            <person name="Thomson N.R."/>
            <person name="Bason N."/>
            <person name="Quail M.A."/>
            <person name="Sharp S."/>
            <person name="Cherevach I."/>
            <person name="Churcher C."/>
            <person name="Goodhead I."/>
            <person name="Hauser H."/>
            <person name="Holroyd N."/>
            <person name="Mungall K."/>
            <person name="Scott P."/>
            <person name="Walker D."/>
            <person name="White B."/>
            <person name="Rose H."/>
            <person name="Iversen P."/>
            <person name="Mil-Homens D."/>
            <person name="Rocha E.P."/>
            <person name="Fialho A.M."/>
            <person name="Baldwin A."/>
            <person name="Dowson C."/>
            <person name="Barrell B.G."/>
            <person name="Govan J.R."/>
            <person name="Vandamme P."/>
            <person name="Hart C.A."/>
            <person name="Mahenthiralingam E."/>
            <person name="Parkhill J."/>
        </authorList>
    </citation>
    <scope>NUCLEOTIDE SEQUENCE [LARGE SCALE GENOMIC DNA]</scope>
    <source>
        <strain>ATCC BAA-245 / DSM 16553 / LMG 16656 / NCTC 13227 / J2315 / CF5610</strain>
    </source>
</reference>